<name>CLCB_ECOBW</name>
<organism>
    <name type="scientific">Escherichia coli (strain K12 / MC4100 / BW2952)</name>
    <dbReference type="NCBI Taxonomy" id="595496"/>
    <lineage>
        <taxon>Bacteria</taxon>
        <taxon>Pseudomonadati</taxon>
        <taxon>Pseudomonadota</taxon>
        <taxon>Gammaproteobacteria</taxon>
        <taxon>Enterobacterales</taxon>
        <taxon>Enterobacteriaceae</taxon>
        <taxon>Escherichia</taxon>
    </lineage>
</organism>
<reference key="1">
    <citation type="journal article" date="2009" name="J. Bacteriol.">
        <title>Genomic sequencing reveals regulatory mutations and recombinational events in the widely used MC4100 lineage of Escherichia coli K-12.</title>
        <authorList>
            <person name="Ferenci T."/>
            <person name="Zhou Z."/>
            <person name="Betteridge T."/>
            <person name="Ren Y."/>
            <person name="Liu Y."/>
            <person name="Feng L."/>
            <person name="Reeves P.R."/>
            <person name="Wang L."/>
        </authorList>
    </citation>
    <scope>NUCLEOTIDE SEQUENCE [LARGE SCALE GENOMIC DNA]</scope>
    <source>
        <strain>K12 / MC4100 / BW2952</strain>
    </source>
</reference>
<gene>
    <name evidence="1" type="primary">clcB</name>
    <name type="ordered locus">BWG_1406</name>
</gene>
<dbReference type="EMBL" id="CP001396">
    <property type="protein sequence ID" value="ACR65258.1"/>
    <property type="molecule type" value="Genomic_DNA"/>
</dbReference>
<dbReference type="SMR" id="C4ZY54"/>
<dbReference type="KEGG" id="ebw:BWG_1406"/>
<dbReference type="HOGENOM" id="CLU_015263_5_2_6"/>
<dbReference type="GO" id="GO:0034707">
    <property type="term" value="C:chloride channel complex"/>
    <property type="evidence" value="ECO:0007669"/>
    <property type="project" value="UniProtKB-KW"/>
</dbReference>
<dbReference type="GO" id="GO:0005886">
    <property type="term" value="C:plasma membrane"/>
    <property type="evidence" value="ECO:0007669"/>
    <property type="project" value="UniProtKB-SubCell"/>
</dbReference>
<dbReference type="GO" id="GO:0005247">
    <property type="term" value="F:voltage-gated chloride channel activity"/>
    <property type="evidence" value="ECO:0007669"/>
    <property type="project" value="UniProtKB-UniRule"/>
</dbReference>
<dbReference type="GO" id="GO:0010447">
    <property type="term" value="P:response to acidic pH"/>
    <property type="evidence" value="ECO:0007669"/>
    <property type="project" value="InterPro"/>
</dbReference>
<dbReference type="CDD" id="cd00400">
    <property type="entry name" value="Voltage_gated_ClC"/>
    <property type="match status" value="1"/>
</dbReference>
<dbReference type="FunFam" id="1.10.3080.10:FF:000010">
    <property type="entry name" value="Voltage-gated ClC-type chloride channel ClcB"/>
    <property type="match status" value="1"/>
</dbReference>
<dbReference type="Gene3D" id="1.10.3080.10">
    <property type="entry name" value="Clc chloride channel"/>
    <property type="match status" value="1"/>
</dbReference>
<dbReference type="HAMAP" id="MF_01203">
    <property type="entry name" value="CLC_ClcB"/>
    <property type="match status" value="1"/>
</dbReference>
<dbReference type="InterPro" id="IPR014743">
    <property type="entry name" value="Cl-channel_core"/>
</dbReference>
<dbReference type="InterPro" id="IPR023790">
    <property type="entry name" value="Cl-channel_volt-gated_ClcB"/>
</dbReference>
<dbReference type="InterPro" id="IPR001807">
    <property type="entry name" value="ClC"/>
</dbReference>
<dbReference type="InterPro" id="IPR050368">
    <property type="entry name" value="ClC-type_chloride_channel"/>
</dbReference>
<dbReference type="NCBIfam" id="NF002437">
    <property type="entry name" value="PRK01610.1"/>
    <property type="match status" value="1"/>
</dbReference>
<dbReference type="PANTHER" id="PTHR43427">
    <property type="entry name" value="CHLORIDE CHANNEL PROTEIN CLC-E"/>
    <property type="match status" value="1"/>
</dbReference>
<dbReference type="PANTHER" id="PTHR43427:SF6">
    <property type="entry name" value="CHLORIDE CHANNEL PROTEIN CLC-E"/>
    <property type="match status" value="1"/>
</dbReference>
<dbReference type="Pfam" id="PF00654">
    <property type="entry name" value="Voltage_CLC"/>
    <property type="match status" value="1"/>
</dbReference>
<dbReference type="PRINTS" id="PR00762">
    <property type="entry name" value="CLCHANNEL"/>
</dbReference>
<dbReference type="SUPFAM" id="SSF81340">
    <property type="entry name" value="Clc chloride channel"/>
    <property type="match status" value="1"/>
</dbReference>
<accession>C4ZY54</accession>
<protein>
    <recommendedName>
        <fullName evidence="1">Voltage-gated ClC-type chloride channel ClcB</fullName>
    </recommendedName>
</protein>
<evidence type="ECO:0000255" key="1">
    <source>
        <dbReference type="HAMAP-Rule" id="MF_01203"/>
    </source>
</evidence>
<comment type="function">
    <text evidence="1">Probably acts as an electrical shunt for an outwardly-directed proton pump that is linked to amino acid decarboxylation, as part of the extreme acid resistance (XAR) response.</text>
</comment>
<comment type="subcellular location">
    <subcellularLocation>
        <location evidence="1">Cell inner membrane</location>
        <topology evidence="1">Multi-pass membrane protein</topology>
    </subcellularLocation>
</comment>
<comment type="similarity">
    <text evidence="1">Belongs to the chloride channel (TC 2.A.49) family. ClcB subfamily.</text>
</comment>
<feature type="chain" id="PRO_1000213849" description="Voltage-gated ClC-type chloride channel ClcB">
    <location>
        <begin position="1"/>
        <end position="418"/>
    </location>
</feature>
<feature type="transmembrane region" description="Helical" evidence="1">
    <location>
        <begin position="2"/>
        <end position="22"/>
    </location>
</feature>
<feature type="transmembrane region" description="Helical" evidence="1">
    <location>
        <begin position="54"/>
        <end position="74"/>
    </location>
</feature>
<feature type="transmembrane region" description="Helical" evidence="1">
    <location>
        <begin position="146"/>
        <end position="166"/>
    </location>
</feature>
<feature type="transmembrane region" description="Helical" evidence="1">
    <location>
        <begin position="168"/>
        <end position="188"/>
    </location>
</feature>
<feature type="transmembrane region" description="Helical" evidence="1">
    <location>
        <begin position="222"/>
        <end position="242"/>
    </location>
</feature>
<feature type="transmembrane region" description="Helical" evidence="1">
    <location>
        <begin position="258"/>
        <end position="278"/>
    </location>
</feature>
<feature type="transmembrane region" description="Helical" evidence="1">
    <location>
        <begin position="291"/>
        <end position="311"/>
    </location>
</feature>
<feature type="transmembrane region" description="Helical" evidence="1">
    <location>
        <begin position="316"/>
        <end position="336"/>
    </location>
</feature>
<feature type="transmembrane region" description="Helical" evidence="1">
    <location>
        <begin position="352"/>
        <end position="372"/>
    </location>
</feature>
<feature type="transmembrane region" description="Helical" evidence="1">
    <location>
        <begin position="380"/>
        <end position="400"/>
    </location>
</feature>
<sequence length="418" mass="44153">MFHRLLIATVVGILAAFAVAGFRHAMLLLEWLFLNNDSGSLVNAATNLSPWRRLLTPALGGLAAGLLLMGWQKFTQQRPHAPTDYMEALQTDGQFDYAASLVKSLASLLVVTSGSAIGREGAMILLAALAASCFAQRFTPRQEWKLWIACGAAAGMAAAYRAPLAGSLFIAEVLFGTMMLASLGPVIISAVVALLVSNLINHSDALLYNVQLSVTVQARDYALIISTGVLAGLCGPLLLTLMNACHRGFVSLKLAPPWQLALGGLIVGLLSLFTPAVWGNGYSTVQSFLTAPPLLMIIAGIFLCKLCAVLASSGSGAPGGVFTPTLFIGLAIGMLYGRSLGLWFPDGEEITLLLGLTGMATLLAATTHAPIMSTLMICEMTGEYQLLPGLLIACVIASVISRTLHRDSIYRQHTAQHS</sequence>
<keyword id="KW-0997">Cell inner membrane</keyword>
<keyword id="KW-1003">Cell membrane</keyword>
<keyword id="KW-0868">Chloride</keyword>
<keyword id="KW-0869">Chloride channel</keyword>
<keyword id="KW-0407">Ion channel</keyword>
<keyword id="KW-0406">Ion transport</keyword>
<keyword id="KW-0472">Membrane</keyword>
<keyword id="KW-0812">Transmembrane</keyword>
<keyword id="KW-1133">Transmembrane helix</keyword>
<keyword id="KW-0813">Transport</keyword>
<keyword id="KW-0851">Voltage-gated channel</keyword>
<proteinExistence type="inferred from homology"/>